<comment type="function">
    <text>Light-harvesting photosynthetic bile pigment-protein from the phycobiliprotein complex.</text>
</comment>
<comment type="subunit">
    <text>Heterodimer of an alpha and a beta chain.</text>
</comment>
<comment type="subcellular location">
    <subcellularLocation>
        <location>Cellular thylakoid membrane</location>
        <topology>Peripheral membrane protein</topology>
        <orientation>Cytoplasmic side</orientation>
    </subcellularLocation>
    <text>Forms the periphery of the phycobilisome rod.</text>
</comment>
<comment type="PTM">
    <text>Contains two covalently linked phycoerythrobilin chromophores and one covalently linked phycourobilin chromophore.</text>
</comment>
<comment type="similarity">
    <text evidence="1">Belongs to the phycobiliprotein family.</text>
</comment>
<protein>
    <recommendedName>
        <fullName>C-phycoerythrin class 2 subunit beta</fullName>
    </recommendedName>
    <alternativeName>
        <fullName>C-phycoerythrin class II beta chain</fullName>
    </alternativeName>
</protein>
<proteinExistence type="evidence at protein level"/>
<name>PHEB2_SYNPY</name>
<reference key="1">
    <citation type="journal article" date="1993" name="Plant Mol. Biol.">
        <title>Genes of the R-phycocyanin II locus of marine Synechococcus spp., and comparison of protein-chromophore interactions in phycocyanins differing in bilin composition.</title>
        <authorList>
            <person name="de Lorimier R."/>
            <person name="Wilbanks S.M."/>
            <person name="Glazer A.N."/>
        </authorList>
    </citation>
    <scope>NUCLEOTIDE SEQUENCE [GENOMIC DNA]</scope>
</reference>
<reference key="2">
    <citation type="journal article" date="1991" name="J. Biol. Chem.">
        <title>Phycoerythrins of marine unicellular cyanobacteria. III. Sequence of a class II phycoerythrin.</title>
        <authorList>
            <person name="Wilbanks S.M."/>
            <person name="de Lorimier R."/>
            <person name="Glazer A.N."/>
        </authorList>
    </citation>
    <scope>NUCLEOTIDE SEQUENCE [GENOMIC DNA]</scope>
</reference>
<reference key="3">
    <citation type="journal article" date="1991" name="J. Biol. Chem.">
        <title>Phycoerythrins of marine unicellular cyanobacteria. I. Bilin types and locations and energy transfer pathways in Synechococcus spp. phycoerythrins.</title>
        <authorList>
            <person name="Ong L.J."/>
            <person name="Glazer A.N."/>
        </authorList>
    </citation>
    <scope>PARTIAL PROTEIN SEQUENCE</scope>
    <scope>CHROMOPHORE BINDING</scope>
</reference>
<keyword id="KW-0042">Antenna complex</keyword>
<keyword id="KW-0089">Bile pigment</keyword>
<keyword id="KW-0157">Chromophore</keyword>
<keyword id="KW-0903">Direct protein sequencing</keyword>
<keyword id="KW-0249">Electron transport</keyword>
<keyword id="KW-0472">Membrane</keyword>
<keyword id="KW-0602">Photosynthesis</keyword>
<keyword id="KW-0605">Phycobilisome</keyword>
<keyword id="KW-0793">Thylakoid</keyword>
<keyword id="KW-0813">Transport</keyword>
<gene>
    <name type="primary">mpeB</name>
</gene>
<organism>
    <name type="scientific">Synechococcus sp. (strain WH8020)</name>
    <dbReference type="NCBI Taxonomy" id="32052"/>
    <lineage>
        <taxon>Bacteria</taxon>
        <taxon>Bacillati</taxon>
        <taxon>Cyanobacteriota</taxon>
        <taxon>Cyanophyceae</taxon>
        <taxon>Synechococcales</taxon>
        <taxon>Synechococcaceae</taxon>
        <taxon>Synechococcus</taxon>
    </lineage>
</organism>
<evidence type="ECO:0000305" key="1"/>
<accession>P27647</accession>
<feature type="chain" id="PRO_0000199204" description="C-phycoerythrin class 2 subunit beta">
    <location>
        <begin position="1"/>
        <end position="178"/>
    </location>
</feature>
<feature type="binding site" description="covalent">
    <location>
        <position position="50"/>
    </location>
    <ligand>
        <name>phycourobilin</name>
        <dbReference type="ChEBI" id="CHEBI:189062"/>
    </ligand>
</feature>
<feature type="binding site" description="covalent">
    <location>
        <position position="61"/>
    </location>
    <ligand>
        <name>phycourobilin</name>
        <dbReference type="ChEBI" id="CHEBI:189062"/>
    </ligand>
</feature>
<feature type="binding site" description="covalent">
    <location>
        <position position="82"/>
    </location>
    <ligand>
        <name>(2R,3E)-phycoerythrobilin</name>
        <dbReference type="ChEBI" id="CHEBI:85276"/>
        <label>1</label>
    </ligand>
</feature>
<feature type="binding site" description="covalent">
    <location>
        <position position="159"/>
    </location>
    <ligand>
        <name>(2R,3E)-phycoerythrobilin</name>
        <dbReference type="ChEBI" id="CHEBI:85276"/>
        <label>2</label>
    </ligand>
</feature>
<sequence>MLDAFSRKAVSADSSGAFIGGGELASLKSFIADGNKRLDAVNALSSNAACIVSDAVAGICCENTGLTAPNGGVYTNRKMAACLRDGEIVLRYVSYALLAGDASVLQDRCLNGLRETYAALGVPTGSAARAVAIMKAASAALITNTNSQPKKAAVTQGDCSSLAGEAGSYFDAVISAIS</sequence>
<dbReference type="EMBL" id="M95288">
    <property type="protein sequence ID" value="AAA27332.1"/>
    <property type="molecule type" value="Genomic_DNA"/>
</dbReference>
<dbReference type="EMBL" id="M61118">
    <property type="protein sequence ID" value="AAA27319.1"/>
    <property type="molecule type" value="Genomic_DNA"/>
</dbReference>
<dbReference type="PIR" id="B40007">
    <property type="entry name" value="B40007"/>
</dbReference>
<dbReference type="RefSeq" id="WP_048347964.1">
    <property type="nucleotide sequence ID" value="NZ_CP011941.1"/>
</dbReference>
<dbReference type="SMR" id="P27647"/>
<dbReference type="STRING" id="32052.WB44_13700"/>
<dbReference type="OrthoDB" id="512145at2"/>
<dbReference type="GO" id="GO:0030089">
    <property type="term" value="C:phycobilisome"/>
    <property type="evidence" value="ECO:0007669"/>
    <property type="project" value="UniProtKB-KW"/>
</dbReference>
<dbReference type="GO" id="GO:0031676">
    <property type="term" value="C:plasma membrane-derived thylakoid membrane"/>
    <property type="evidence" value="ECO:0007669"/>
    <property type="project" value="UniProtKB-SubCell"/>
</dbReference>
<dbReference type="GO" id="GO:0015979">
    <property type="term" value="P:photosynthesis"/>
    <property type="evidence" value="ECO:0007669"/>
    <property type="project" value="UniProtKB-KW"/>
</dbReference>
<dbReference type="Gene3D" id="1.10.490.20">
    <property type="entry name" value="Phycocyanins"/>
    <property type="match status" value="1"/>
</dbReference>
<dbReference type="InterPro" id="IPR009050">
    <property type="entry name" value="Globin-like_sf"/>
</dbReference>
<dbReference type="InterPro" id="IPR012128">
    <property type="entry name" value="Phycobilisome_asu/bsu"/>
</dbReference>
<dbReference type="InterPro" id="IPR038719">
    <property type="entry name" value="Phycobilisome_asu/bsu_sf"/>
</dbReference>
<dbReference type="PANTHER" id="PTHR34011:SF7">
    <property type="entry name" value="C-PHYCOCYANIN BETA SUBUNIT"/>
    <property type="match status" value="1"/>
</dbReference>
<dbReference type="PANTHER" id="PTHR34011">
    <property type="entry name" value="PHYCOBILISOME 32.1 KDA LINKER POLYPEPTIDE, PHYCOCYANIN-ASSOCIATED, ROD 2-RELATED"/>
    <property type="match status" value="1"/>
</dbReference>
<dbReference type="Pfam" id="PF00502">
    <property type="entry name" value="Phycobilisome"/>
    <property type="match status" value="1"/>
</dbReference>
<dbReference type="PIRSF" id="PIRSF000081">
    <property type="entry name" value="Phycocyanin"/>
    <property type="match status" value="1"/>
</dbReference>
<dbReference type="SUPFAM" id="SSF46458">
    <property type="entry name" value="Globin-like"/>
    <property type="match status" value="1"/>
</dbReference>